<name>YBAB_ECO81</name>
<dbReference type="EMBL" id="CU928162">
    <property type="protein sequence ID" value="CAR06704.1"/>
    <property type="molecule type" value="Genomic_DNA"/>
</dbReference>
<dbReference type="RefSeq" id="WP_000467098.1">
    <property type="nucleotide sequence ID" value="NC_011745.1"/>
</dbReference>
<dbReference type="SMR" id="B7MQI6"/>
<dbReference type="KEGG" id="ecq:ECED1_0494"/>
<dbReference type="HOGENOM" id="CLU_140930_0_0_6"/>
<dbReference type="Proteomes" id="UP000000748">
    <property type="component" value="Chromosome"/>
</dbReference>
<dbReference type="GO" id="GO:0043590">
    <property type="term" value="C:bacterial nucleoid"/>
    <property type="evidence" value="ECO:0007669"/>
    <property type="project" value="UniProtKB-UniRule"/>
</dbReference>
<dbReference type="GO" id="GO:0005829">
    <property type="term" value="C:cytosol"/>
    <property type="evidence" value="ECO:0007669"/>
    <property type="project" value="TreeGrafter"/>
</dbReference>
<dbReference type="GO" id="GO:0003677">
    <property type="term" value="F:DNA binding"/>
    <property type="evidence" value="ECO:0007669"/>
    <property type="project" value="UniProtKB-UniRule"/>
</dbReference>
<dbReference type="FunFam" id="3.30.1310.10:FF:000001">
    <property type="entry name" value="Nucleoid-associated protein YbaB"/>
    <property type="match status" value="1"/>
</dbReference>
<dbReference type="Gene3D" id="3.30.1310.10">
    <property type="entry name" value="Nucleoid-associated protein YbaB-like domain"/>
    <property type="match status" value="1"/>
</dbReference>
<dbReference type="HAMAP" id="MF_00274">
    <property type="entry name" value="DNA_YbaB_EbfC"/>
    <property type="match status" value="1"/>
</dbReference>
<dbReference type="InterPro" id="IPR036894">
    <property type="entry name" value="YbaB-like_sf"/>
</dbReference>
<dbReference type="InterPro" id="IPR004401">
    <property type="entry name" value="YbaB/EbfC"/>
</dbReference>
<dbReference type="NCBIfam" id="TIGR00103">
    <property type="entry name" value="DNA_YbaB_EbfC"/>
    <property type="match status" value="1"/>
</dbReference>
<dbReference type="PANTHER" id="PTHR33449">
    <property type="entry name" value="NUCLEOID-ASSOCIATED PROTEIN YBAB"/>
    <property type="match status" value="1"/>
</dbReference>
<dbReference type="PANTHER" id="PTHR33449:SF1">
    <property type="entry name" value="NUCLEOID-ASSOCIATED PROTEIN YBAB"/>
    <property type="match status" value="1"/>
</dbReference>
<dbReference type="Pfam" id="PF02575">
    <property type="entry name" value="YbaB_DNA_bd"/>
    <property type="match status" value="1"/>
</dbReference>
<dbReference type="PIRSF" id="PIRSF004555">
    <property type="entry name" value="UCP004555"/>
    <property type="match status" value="1"/>
</dbReference>
<dbReference type="SUPFAM" id="SSF82607">
    <property type="entry name" value="YbaB-like"/>
    <property type="match status" value="1"/>
</dbReference>
<sequence>MFGKGGLGNLMKQAQQMQEKMQKMQEEIAQLEVTGESGAGLVKVTINGAHNCRRVEIDPSLLEDDKEMLEDLVAAAFNDAARRIEETQKEKMASVSSGMQLPPGFKMPF</sequence>
<protein>
    <recommendedName>
        <fullName evidence="1">Nucleoid-associated protein YbaB</fullName>
    </recommendedName>
</protein>
<proteinExistence type="inferred from homology"/>
<comment type="function">
    <text evidence="1">Binds to DNA and alters its conformation. May be involved in regulation of gene expression, nucleoid organization and DNA protection.</text>
</comment>
<comment type="subunit">
    <text evidence="1">Homodimer.</text>
</comment>
<comment type="subcellular location">
    <subcellularLocation>
        <location evidence="1">Cytoplasm</location>
        <location evidence="1">Nucleoid</location>
    </subcellularLocation>
</comment>
<comment type="similarity">
    <text evidence="1">Belongs to the YbaB/EbfC family.</text>
</comment>
<gene>
    <name evidence="1" type="primary">ybaB</name>
    <name type="ordered locus">ECED1_0494</name>
</gene>
<evidence type="ECO:0000255" key="1">
    <source>
        <dbReference type="HAMAP-Rule" id="MF_00274"/>
    </source>
</evidence>
<keyword id="KW-0963">Cytoplasm</keyword>
<keyword id="KW-0238">DNA-binding</keyword>
<accession>B7MQI6</accession>
<feature type="chain" id="PRO_1000197656" description="Nucleoid-associated protein YbaB">
    <location>
        <begin position="1"/>
        <end position="109"/>
    </location>
</feature>
<reference key="1">
    <citation type="journal article" date="2009" name="PLoS Genet.">
        <title>Organised genome dynamics in the Escherichia coli species results in highly diverse adaptive paths.</title>
        <authorList>
            <person name="Touchon M."/>
            <person name="Hoede C."/>
            <person name="Tenaillon O."/>
            <person name="Barbe V."/>
            <person name="Baeriswyl S."/>
            <person name="Bidet P."/>
            <person name="Bingen E."/>
            <person name="Bonacorsi S."/>
            <person name="Bouchier C."/>
            <person name="Bouvet O."/>
            <person name="Calteau A."/>
            <person name="Chiapello H."/>
            <person name="Clermont O."/>
            <person name="Cruveiller S."/>
            <person name="Danchin A."/>
            <person name="Diard M."/>
            <person name="Dossat C."/>
            <person name="Karoui M.E."/>
            <person name="Frapy E."/>
            <person name="Garry L."/>
            <person name="Ghigo J.M."/>
            <person name="Gilles A.M."/>
            <person name="Johnson J."/>
            <person name="Le Bouguenec C."/>
            <person name="Lescat M."/>
            <person name="Mangenot S."/>
            <person name="Martinez-Jehanne V."/>
            <person name="Matic I."/>
            <person name="Nassif X."/>
            <person name="Oztas S."/>
            <person name="Petit M.A."/>
            <person name="Pichon C."/>
            <person name="Rouy Z."/>
            <person name="Ruf C.S."/>
            <person name="Schneider D."/>
            <person name="Tourret J."/>
            <person name="Vacherie B."/>
            <person name="Vallenet D."/>
            <person name="Medigue C."/>
            <person name="Rocha E.P.C."/>
            <person name="Denamur E."/>
        </authorList>
    </citation>
    <scope>NUCLEOTIDE SEQUENCE [LARGE SCALE GENOMIC DNA]</scope>
    <source>
        <strain>ED1a</strain>
    </source>
</reference>
<organism>
    <name type="scientific">Escherichia coli O81 (strain ED1a)</name>
    <dbReference type="NCBI Taxonomy" id="585397"/>
    <lineage>
        <taxon>Bacteria</taxon>
        <taxon>Pseudomonadati</taxon>
        <taxon>Pseudomonadota</taxon>
        <taxon>Gammaproteobacteria</taxon>
        <taxon>Enterobacterales</taxon>
        <taxon>Enterobacteriaceae</taxon>
        <taxon>Escherichia</taxon>
    </lineage>
</organism>